<gene>
    <name evidence="8" type="primary">BIP3</name>
    <name evidence="11" type="ordered locus">Os05g0367800</name>
    <name evidence="9" type="ordered locus">LOC_Os05g30480</name>
    <name evidence="10" type="ORF">OJ1393_A07.8</name>
</gene>
<dbReference type="EMBL" id="AC104279">
    <property type="protein sequence ID" value="AAT38017.1"/>
    <property type="molecule type" value="Genomic_DNA"/>
</dbReference>
<dbReference type="EMBL" id="AP008211">
    <property type="protein sequence ID" value="BAF17253.1"/>
    <property type="molecule type" value="Genomic_DNA"/>
</dbReference>
<dbReference type="EMBL" id="AP014961">
    <property type="protein sequence ID" value="BAS93656.1"/>
    <property type="molecule type" value="Genomic_DNA"/>
</dbReference>
<dbReference type="RefSeq" id="XP_015638605.1">
    <property type="nucleotide sequence ID" value="XM_015783119.1"/>
</dbReference>
<dbReference type="SMR" id="Q6L590"/>
<dbReference type="FunCoup" id="Q6L590">
    <property type="interactions" value="198"/>
</dbReference>
<dbReference type="STRING" id="39947.Q6L590"/>
<dbReference type="GlyCosmos" id="Q6L590">
    <property type="glycosylation" value="1 site, No reported glycans"/>
</dbReference>
<dbReference type="PaxDb" id="39947-Q6L590"/>
<dbReference type="EnsemblPlants" id="Os05t0367800-00">
    <property type="protein sequence ID" value="Os05t0367800-00"/>
    <property type="gene ID" value="Os05g0367800"/>
</dbReference>
<dbReference type="Gramene" id="Os05t0367800-00">
    <property type="protein sequence ID" value="Os05t0367800-00"/>
    <property type="gene ID" value="Os05g0367800"/>
</dbReference>
<dbReference type="KEGG" id="dosa:Os05g0367800"/>
<dbReference type="eggNOG" id="KOG0100">
    <property type="taxonomic scope" value="Eukaryota"/>
</dbReference>
<dbReference type="HOGENOM" id="CLU_005965_2_3_1"/>
<dbReference type="InParanoid" id="Q6L590"/>
<dbReference type="OMA" id="QPNQGVN"/>
<dbReference type="OrthoDB" id="2401965at2759"/>
<dbReference type="Proteomes" id="UP000000763">
    <property type="component" value="Chromosome 5"/>
</dbReference>
<dbReference type="Proteomes" id="UP000059680">
    <property type="component" value="Chromosome 5"/>
</dbReference>
<dbReference type="GO" id="GO:0005737">
    <property type="term" value="C:cytoplasm"/>
    <property type="evidence" value="ECO:0000318"/>
    <property type="project" value="GO_Central"/>
</dbReference>
<dbReference type="GO" id="GO:0034663">
    <property type="term" value="C:endoplasmic reticulum chaperone complex"/>
    <property type="evidence" value="ECO:0000318"/>
    <property type="project" value="GO_Central"/>
</dbReference>
<dbReference type="GO" id="GO:0005788">
    <property type="term" value="C:endoplasmic reticulum lumen"/>
    <property type="evidence" value="ECO:0000318"/>
    <property type="project" value="GO_Central"/>
</dbReference>
<dbReference type="GO" id="GO:0016020">
    <property type="term" value="C:membrane"/>
    <property type="evidence" value="ECO:0000318"/>
    <property type="project" value="GO_Central"/>
</dbReference>
<dbReference type="GO" id="GO:0005634">
    <property type="term" value="C:nucleus"/>
    <property type="evidence" value="ECO:0000318"/>
    <property type="project" value="GO_Central"/>
</dbReference>
<dbReference type="GO" id="GO:0005524">
    <property type="term" value="F:ATP binding"/>
    <property type="evidence" value="ECO:0007669"/>
    <property type="project" value="UniProtKB-KW"/>
</dbReference>
<dbReference type="GO" id="GO:0016887">
    <property type="term" value="F:ATP hydrolysis activity"/>
    <property type="evidence" value="ECO:0000318"/>
    <property type="project" value="GO_Central"/>
</dbReference>
<dbReference type="GO" id="GO:0140662">
    <property type="term" value="F:ATP-dependent protein folding chaperone"/>
    <property type="evidence" value="ECO:0007669"/>
    <property type="project" value="InterPro"/>
</dbReference>
<dbReference type="GO" id="GO:0031072">
    <property type="term" value="F:heat shock protein binding"/>
    <property type="evidence" value="ECO:0000318"/>
    <property type="project" value="GO_Central"/>
</dbReference>
<dbReference type="GO" id="GO:0044183">
    <property type="term" value="F:protein folding chaperone"/>
    <property type="evidence" value="ECO:0000318"/>
    <property type="project" value="GO_Central"/>
</dbReference>
<dbReference type="GO" id="GO:0051085">
    <property type="term" value="P:chaperone cofactor-dependent protein refolding"/>
    <property type="evidence" value="ECO:0000318"/>
    <property type="project" value="GO_Central"/>
</dbReference>
<dbReference type="GO" id="GO:0030968">
    <property type="term" value="P:endoplasmic reticulum unfolded protein response"/>
    <property type="evidence" value="ECO:0000318"/>
    <property type="project" value="GO_Central"/>
</dbReference>
<dbReference type="GO" id="GO:0036503">
    <property type="term" value="P:ERAD pathway"/>
    <property type="evidence" value="ECO:0000318"/>
    <property type="project" value="GO_Central"/>
</dbReference>
<dbReference type="GO" id="GO:0042026">
    <property type="term" value="P:protein refolding"/>
    <property type="evidence" value="ECO:0000318"/>
    <property type="project" value="GO_Central"/>
</dbReference>
<dbReference type="CDD" id="cd10241">
    <property type="entry name" value="ASKHA_NBD_HSP70_BiP"/>
    <property type="match status" value="1"/>
</dbReference>
<dbReference type="FunFam" id="2.60.34.10:FF:000002">
    <property type="entry name" value="Heat shock 70 kDa"/>
    <property type="match status" value="1"/>
</dbReference>
<dbReference type="FunFam" id="3.90.640.10:FF:000002">
    <property type="entry name" value="Heat shock 70 kDa"/>
    <property type="match status" value="1"/>
</dbReference>
<dbReference type="FunFam" id="1.20.1270.10:FF:000040">
    <property type="entry name" value="Heat shock 70 kDa protein BIP5"/>
    <property type="match status" value="1"/>
</dbReference>
<dbReference type="FunFam" id="3.30.420.40:FF:000026">
    <property type="entry name" value="Heat shock protein 70"/>
    <property type="match status" value="1"/>
</dbReference>
<dbReference type="Gene3D" id="1.20.1270.10">
    <property type="match status" value="1"/>
</dbReference>
<dbReference type="Gene3D" id="3.30.420.40">
    <property type="match status" value="2"/>
</dbReference>
<dbReference type="Gene3D" id="3.90.640.10">
    <property type="entry name" value="Actin, Chain A, domain 4"/>
    <property type="match status" value="1"/>
</dbReference>
<dbReference type="Gene3D" id="2.60.34.10">
    <property type="entry name" value="Substrate Binding Domain Of DNAk, Chain A, domain 1"/>
    <property type="match status" value="1"/>
</dbReference>
<dbReference type="InterPro" id="IPR043129">
    <property type="entry name" value="ATPase_NBD"/>
</dbReference>
<dbReference type="InterPro" id="IPR042050">
    <property type="entry name" value="BIP_NBD"/>
</dbReference>
<dbReference type="InterPro" id="IPR018181">
    <property type="entry name" value="Heat_shock_70_CS"/>
</dbReference>
<dbReference type="InterPro" id="IPR029048">
    <property type="entry name" value="HSP70_C_sf"/>
</dbReference>
<dbReference type="InterPro" id="IPR029047">
    <property type="entry name" value="HSP70_peptide-bd_sf"/>
</dbReference>
<dbReference type="InterPro" id="IPR013126">
    <property type="entry name" value="Hsp_70_fam"/>
</dbReference>
<dbReference type="NCBIfam" id="NF001413">
    <property type="entry name" value="PRK00290.1"/>
    <property type="match status" value="1"/>
</dbReference>
<dbReference type="PANTHER" id="PTHR19375">
    <property type="entry name" value="HEAT SHOCK PROTEIN 70KDA"/>
    <property type="match status" value="1"/>
</dbReference>
<dbReference type="Pfam" id="PF00012">
    <property type="entry name" value="HSP70"/>
    <property type="match status" value="1"/>
</dbReference>
<dbReference type="PRINTS" id="PR00301">
    <property type="entry name" value="HEATSHOCK70"/>
</dbReference>
<dbReference type="SUPFAM" id="SSF53067">
    <property type="entry name" value="Actin-like ATPase domain"/>
    <property type="match status" value="2"/>
</dbReference>
<dbReference type="SUPFAM" id="SSF100934">
    <property type="entry name" value="Heat shock protein 70kD (HSP70), C-terminal subdomain"/>
    <property type="match status" value="1"/>
</dbReference>
<dbReference type="SUPFAM" id="SSF100920">
    <property type="entry name" value="Heat shock protein 70kD (HSP70), peptide-binding domain"/>
    <property type="match status" value="1"/>
</dbReference>
<dbReference type="PROSITE" id="PS00014">
    <property type="entry name" value="ER_TARGET"/>
    <property type="match status" value="1"/>
</dbReference>
<dbReference type="PROSITE" id="PS00297">
    <property type="entry name" value="HSP70_1"/>
    <property type="match status" value="1"/>
</dbReference>
<dbReference type="PROSITE" id="PS00329">
    <property type="entry name" value="HSP70_2"/>
    <property type="match status" value="1"/>
</dbReference>
<dbReference type="PROSITE" id="PS01036">
    <property type="entry name" value="HSP70_3"/>
    <property type="match status" value="1"/>
</dbReference>
<comment type="function">
    <text evidence="1">Functions as a chaperone during endoplasmic reticulum (ER) stress response.</text>
</comment>
<comment type="subcellular location">
    <subcellularLocation>
        <location evidence="4">Endoplasmic reticulum</location>
    </subcellularLocation>
</comment>
<comment type="induction">
    <text evidence="6 7">By dithiothreitol-induced endoplasmic reticulum (ER) stress response (PubMed:22050533, PubMed:24153418). Induced by tunicamycin-induced ER stress response (PubMed:24153418).</text>
</comment>
<comment type="similarity">
    <text evidence="9">Belongs to the heat shock protein 70 family.</text>
</comment>
<proteinExistence type="evidence at transcript level"/>
<protein>
    <recommendedName>
        <fullName evidence="9">Heat shock 70 kDa protein BIP3</fullName>
    </recommendedName>
    <alternativeName>
        <fullName evidence="9">Luminal-binding protein 3</fullName>
        <shortName evidence="8">OsBiP3</shortName>
    </alternativeName>
</protein>
<evidence type="ECO:0000250" key="1">
    <source>
        <dbReference type="UniProtKB" id="Q6Z7B0"/>
    </source>
</evidence>
<evidence type="ECO:0000255" key="2"/>
<evidence type="ECO:0000255" key="3">
    <source>
        <dbReference type="PROSITE-ProRule" id="PRU00498"/>
    </source>
</evidence>
<evidence type="ECO:0000255" key="4">
    <source>
        <dbReference type="PROSITE-ProRule" id="PRU10138"/>
    </source>
</evidence>
<evidence type="ECO:0000256" key="5">
    <source>
        <dbReference type="SAM" id="MobiDB-lite"/>
    </source>
</evidence>
<evidence type="ECO:0000269" key="6">
    <source>
    </source>
</evidence>
<evidence type="ECO:0000269" key="7">
    <source>
    </source>
</evidence>
<evidence type="ECO:0000303" key="8">
    <source>
    </source>
</evidence>
<evidence type="ECO:0000305" key="9"/>
<evidence type="ECO:0000312" key="10">
    <source>
        <dbReference type="EMBL" id="AAT38017.1"/>
    </source>
</evidence>
<evidence type="ECO:0000312" key="11">
    <source>
        <dbReference type="EMBL" id="BAF17253.1"/>
    </source>
</evidence>
<accession>Q6L590</accession>
<sequence length="669" mass="72218">MARGATWTRRLHLHGLFLAVLLLLTLPAGSTAAAGGGGGTVIGIDLGTTYSCVGVYRNGHVEIIANDQGNRITPSWVAFTGGGERLIGEAAKNQAAANPGRTVYDAKRLIGRRFADAEVQRDMRLLPFAVVDKGGKPHVRVEVRGGDVRLLSPEEVSAMVLARMKETAEAYLGEEVTRAVVTVPAYFNDAQRQATKDAATIAGLAVERILNEPTAAALAYGVGKEGAGGKNVLVFDLGGGTFDVSVLAIDGGVYEVLATNGDTHLGGEDFDQRVMEHFVELVRRKHGRDIAGDARALGKLRRECERAKRALSIQHQVRVEVESLFDGVDLSEPLSRARFEELNNDLFRKTMAPVRKAMADARLSNADIDEIVLVGGSTRIPKVRQLLRDYFGGKQPNQGVNPDEAVAYGAAIQANIVGGDTDNKTRDMVVLDVTPLTLGLETAGGVMATLIPRNTPVPTKRAQLFSTYKDKQTTVTVKVFEGERSMTRDNRLLGRFDLAGIAPAPRGAPQIEVAFEVDADGILSVSAADRATGRSERITISGDDRKTSREEIDRMLGEAEEFADEDRRHRERAGARNSLEAYVYGVKNAVVGGEMAGAMDGGEKEKVEAAVMEAYEWLDGNQDVGKEEYEEKLRELEDVCNPVMSAVYQRSGGSRRDGDGGGDDDHDEL</sequence>
<organism>
    <name type="scientific">Oryza sativa subsp. japonica</name>
    <name type="common">Rice</name>
    <dbReference type="NCBI Taxonomy" id="39947"/>
    <lineage>
        <taxon>Eukaryota</taxon>
        <taxon>Viridiplantae</taxon>
        <taxon>Streptophyta</taxon>
        <taxon>Embryophyta</taxon>
        <taxon>Tracheophyta</taxon>
        <taxon>Spermatophyta</taxon>
        <taxon>Magnoliopsida</taxon>
        <taxon>Liliopsida</taxon>
        <taxon>Poales</taxon>
        <taxon>Poaceae</taxon>
        <taxon>BOP clade</taxon>
        <taxon>Oryzoideae</taxon>
        <taxon>Oryzeae</taxon>
        <taxon>Oryzinae</taxon>
        <taxon>Oryza</taxon>
        <taxon>Oryza sativa</taxon>
    </lineage>
</organism>
<keyword id="KW-0067">ATP-binding</keyword>
<keyword id="KW-0143">Chaperone</keyword>
<keyword id="KW-0256">Endoplasmic reticulum</keyword>
<keyword id="KW-0325">Glycoprotein</keyword>
<keyword id="KW-0547">Nucleotide-binding</keyword>
<keyword id="KW-1185">Reference proteome</keyword>
<keyword id="KW-0732">Signal</keyword>
<keyword id="KW-0346">Stress response</keyword>
<reference key="1">
    <citation type="journal article" date="2005" name="Mol. Genet. Genomics">
        <title>A fine physical map of the rice chromosome 5.</title>
        <authorList>
            <person name="Cheng C.-H."/>
            <person name="Chung M.C."/>
            <person name="Liu S.-M."/>
            <person name="Chen S.-K."/>
            <person name="Kao F.Y."/>
            <person name="Lin S.-J."/>
            <person name="Hsiao S.-H."/>
            <person name="Tseng I.C."/>
            <person name="Hsing Y.-I.C."/>
            <person name="Wu H.-P."/>
            <person name="Chen C.-S."/>
            <person name="Shaw J.-F."/>
            <person name="Wu J."/>
            <person name="Matsumoto T."/>
            <person name="Sasaki T."/>
            <person name="Chen H.-C."/>
            <person name="Chow T.-Y."/>
        </authorList>
    </citation>
    <scope>NUCLEOTIDE SEQUENCE [LARGE SCALE GENOMIC DNA]</scope>
    <source>
        <strain>cv. Nipponbare</strain>
    </source>
</reference>
<reference key="2">
    <citation type="journal article" date="2005" name="Nature">
        <title>The map-based sequence of the rice genome.</title>
        <authorList>
            <consortium name="International rice genome sequencing project (IRGSP)"/>
        </authorList>
    </citation>
    <scope>NUCLEOTIDE SEQUENCE [LARGE SCALE GENOMIC DNA]</scope>
    <source>
        <strain>cv. Nipponbare</strain>
    </source>
</reference>
<reference key="3">
    <citation type="journal article" date="2008" name="Nucleic Acids Res.">
        <title>The rice annotation project database (RAP-DB): 2008 update.</title>
        <authorList>
            <consortium name="The rice annotation project (RAP)"/>
        </authorList>
    </citation>
    <scope>GENOME REANNOTATION</scope>
    <source>
        <strain>cv. Nipponbare</strain>
    </source>
</reference>
<reference key="4">
    <citation type="journal article" date="2013" name="Rice">
        <title>Improvement of the Oryza sativa Nipponbare reference genome using next generation sequence and optical map data.</title>
        <authorList>
            <person name="Kawahara Y."/>
            <person name="de la Bastide M."/>
            <person name="Hamilton J.P."/>
            <person name="Kanamori H."/>
            <person name="McCombie W.R."/>
            <person name="Ouyang S."/>
            <person name="Schwartz D.C."/>
            <person name="Tanaka T."/>
            <person name="Wu J."/>
            <person name="Zhou S."/>
            <person name="Childs K.L."/>
            <person name="Davidson R.M."/>
            <person name="Lin H."/>
            <person name="Quesada-Ocampo L."/>
            <person name="Vaillancourt B."/>
            <person name="Sakai H."/>
            <person name="Lee S.S."/>
            <person name="Kim J."/>
            <person name="Numa H."/>
            <person name="Itoh T."/>
            <person name="Buell C.R."/>
            <person name="Matsumoto T."/>
        </authorList>
    </citation>
    <scope>GENOME REANNOTATION</scope>
    <source>
        <strain>cv. Nipponbare</strain>
    </source>
</reference>
<reference key="5">
    <citation type="journal article" date="2012" name="Plant J.">
        <title>Signal transduction by IRE1-mediated splicing of bZIP50 and other stress sensors in the endoplasmic reticulum stress response of rice.</title>
        <authorList>
            <person name="Hayashi S."/>
            <person name="Wakasa Y."/>
            <person name="Takahashi H."/>
            <person name="Kawakatsu T."/>
            <person name="Takaiwa F."/>
        </authorList>
    </citation>
    <scope>INDUCTION BY DITHIOTHREITOL</scope>
    <scope>GENE FAMILY</scope>
    <scope>NOMENCLATURE</scope>
</reference>
<reference key="6">
    <citation type="journal article" date="2013" name="J. Exp. Bot.">
        <title>Analysis of rice ER-resident J-proteins reveals diversity and functional differentiation of the ER-resident Hsp70 system in plants.</title>
        <authorList>
            <person name="Ohta M."/>
            <person name="Wakasa Y."/>
            <person name="Takahashi H."/>
            <person name="Hayashi S."/>
            <person name="Kudo K."/>
            <person name="Takaiwa F."/>
        </authorList>
    </citation>
    <scope>INDUCTION</scope>
</reference>
<feature type="signal peptide" evidence="2">
    <location>
        <begin position="1"/>
        <end position="32"/>
    </location>
</feature>
<feature type="chain" id="PRO_5008176461" description="Heat shock 70 kDa protein BIP3">
    <location>
        <begin position="33"/>
        <end position="669"/>
    </location>
</feature>
<feature type="region of interest" description="Disordered" evidence="5">
    <location>
        <begin position="646"/>
        <end position="669"/>
    </location>
</feature>
<feature type="short sequence motif" description="Prevents secretion from ER" evidence="4">
    <location>
        <begin position="666"/>
        <end position="669"/>
    </location>
</feature>
<feature type="compositionally biased region" description="Acidic residues" evidence="5">
    <location>
        <begin position="660"/>
        <end position="669"/>
    </location>
</feature>
<feature type="glycosylation site" description="N-linked (GlcNAc...) asparagine" evidence="3">
    <location>
        <position position="423"/>
    </location>
</feature>
<name>BIP3_ORYSJ</name>